<feature type="chain" id="PRO_1000114742" description="Potassium-transporting ATPase KdpC subunit">
    <location>
        <begin position="1"/>
        <end position="194"/>
    </location>
</feature>
<feature type="transmembrane region" description="Helical" evidence="1">
    <location>
        <begin position="12"/>
        <end position="34"/>
    </location>
</feature>
<name>KDPC_SALNS</name>
<reference key="1">
    <citation type="journal article" date="2011" name="J. Bacteriol.">
        <title>Comparative genomics of 28 Salmonella enterica isolates: evidence for CRISPR-mediated adaptive sublineage evolution.</title>
        <authorList>
            <person name="Fricke W.F."/>
            <person name="Mammel M.K."/>
            <person name="McDermott P.F."/>
            <person name="Tartera C."/>
            <person name="White D.G."/>
            <person name="Leclerc J.E."/>
            <person name="Ravel J."/>
            <person name="Cebula T.A."/>
        </authorList>
    </citation>
    <scope>NUCLEOTIDE SEQUENCE [LARGE SCALE GENOMIC DNA]</scope>
    <source>
        <strain>SL254</strain>
    </source>
</reference>
<gene>
    <name evidence="1" type="primary">kdpC</name>
    <name type="ordered locus">SNSL254_A0765</name>
</gene>
<accession>B4SZB0</accession>
<proteinExistence type="inferred from homology"/>
<comment type="function">
    <text evidence="1">Part of the high-affinity ATP-driven potassium transport (or Kdp) system, which catalyzes the hydrolysis of ATP coupled with the electrogenic transport of potassium into the cytoplasm. This subunit acts as a catalytic chaperone that increases the ATP-binding affinity of the ATP-hydrolyzing subunit KdpB by the formation of a transient KdpB/KdpC/ATP ternary complex.</text>
</comment>
<comment type="subunit">
    <text evidence="1">The system is composed of three essential subunits: KdpA, KdpB and KdpC.</text>
</comment>
<comment type="subcellular location">
    <subcellularLocation>
        <location evidence="1">Cell inner membrane</location>
        <topology evidence="1">Single-pass membrane protein</topology>
    </subcellularLocation>
</comment>
<comment type="similarity">
    <text evidence="1">Belongs to the KdpC family.</text>
</comment>
<organism>
    <name type="scientific">Salmonella newport (strain SL254)</name>
    <dbReference type="NCBI Taxonomy" id="423368"/>
    <lineage>
        <taxon>Bacteria</taxon>
        <taxon>Pseudomonadati</taxon>
        <taxon>Pseudomonadota</taxon>
        <taxon>Gammaproteobacteria</taxon>
        <taxon>Enterobacterales</taxon>
        <taxon>Enterobacteriaceae</taxon>
        <taxon>Salmonella</taxon>
    </lineage>
</organism>
<dbReference type="EMBL" id="CP001113">
    <property type="protein sequence ID" value="ACF64315.1"/>
    <property type="molecule type" value="Genomic_DNA"/>
</dbReference>
<dbReference type="RefSeq" id="WP_000579804.1">
    <property type="nucleotide sequence ID" value="NZ_CCMR01000003.1"/>
</dbReference>
<dbReference type="SMR" id="B4SZB0"/>
<dbReference type="KEGG" id="see:SNSL254_A0765"/>
<dbReference type="HOGENOM" id="CLU_077094_2_0_6"/>
<dbReference type="Proteomes" id="UP000008824">
    <property type="component" value="Chromosome"/>
</dbReference>
<dbReference type="GO" id="GO:0005886">
    <property type="term" value="C:plasma membrane"/>
    <property type="evidence" value="ECO:0007669"/>
    <property type="project" value="UniProtKB-SubCell"/>
</dbReference>
<dbReference type="GO" id="GO:0005524">
    <property type="term" value="F:ATP binding"/>
    <property type="evidence" value="ECO:0007669"/>
    <property type="project" value="UniProtKB-UniRule"/>
</dbReference>
<dbReference type="GO" id="GO:0008556">
    <property type="term" value="F:P-type potassium transmembrane transporter activity"/>
    <property type="evidence" value="ECO:0007669"/>
    <property type="project" value="InterPro"/>
</dbReference>
<dbReference type="HAMAP" id="MF_00276">
    <property type="entry name" value="KdpC"/>
    <property type="match status" value="1"/>
</dbReference>
<dbReference type="InterPro" id="IPR003820">
    <property type="entry name" value="KdpC"/>
</dbReference>
<dbReference type="NCBIfam" id="TIGR00681">
    <property type="entry name" value="kdpC"/>
    <property type="match status" value="1"/>
</dbReference>
<dbReference type="NCBIfam" id="NF001454">
    <property type="entry name" value="PRK00315.1"/>
    <property type="match status" value="1"/>
</dbReference>
<dbReference type="PANTHER" id="PTHR30042">
    <property type="entry name" value="POTASSIUM-TRANSPORTING ATPASE C CHAIN"/>
    <property type="match status" value="1"/>
</dbReference>
<dbReference type="PANTHER" id="PTHR30042:SF2">
    <property type="entry name" value="POTASSIUM-TRANSPORTING ATPASE KDPC SUBUNIT"/>
    <property type="match status" value="1"/>
</dbReference>
<dbReference type="Pfam" id="PF02669">
    <property type="entry name" value="KdpC"/>
    <property type="match status" value="1"/>
</dbReference>
<dbReference type="PIRSF" id="PIRSF001296">
    <property type="entry name" value="K_ATPase_KdpC"/>
    <property type="match status" value="1"/>
</dbReference>
<keyword id="KW-0067">ATP-binding</keyword>
<keyword id="KW-0997">Cell inner membrane</keyword>
<keyword id="KW-1003">Cell membrane</keyword>
<keyword id="KW-0406">Ion transport</keyword>
<keyword id="KW-0472">Membrane</keyword>
<keyword id="KW-0547">Nucleotide-binding</keyword>
<keyword id="KW-0630">Potassium</keyword>
<keyword id="KW-0633">Potassium transport</keyword>
<keyword id="KW-0812">Transmembrane</keyword>
<keyword id="KW-1133">Transmembrane helix</keyword>
<keyword id="KW-0813">Transport</keyword>
<sequence>MIGLRPAFSTMLFLLLLTGGVYPLLTTALGQWWFPWQANGSLIHKDNVIRGSALIGQSFTAAGYFHGRPSATADTPYNPLASGGSNLAASNPELDAQIQARVAALRAANPQASSAVPVELATASASGLDNNLTPGAAAWQIPRVAAARQLPVEQVAQLVAEYTHRPLARFLGQPVVNIVELNLALDALQGHRAK</sequence>
<evidence type="ECO:0000255" key="1">
    <source>
        <dbReference type="HAMAP-Rule" id="MF_00276"/>
    </source>
</evidence>
<protein>
    <recommendedName>
        <fullName evidence="1">Potassium-transporting ATPase KdpC subunit</fullName>
    </recommendedName>
    <alternativeName>
        <fullName evidence="1">ATP phosphohydrolase [potassium-transporting] C chain</fullName>
    </alternativeName>
    <alternativeName>
        <fullName evidence="1">Potassium-binding and translocating subunit C</fullName>
    </alternativeName>
    <alternativeName>
        <fullName evidence="1">Potassium-translocating ATPase C chain</fullName>
    </alternativeName>
</protein>